<dbReference type="EMBL" id="U65079">
    <property type="protein sequence ID" value="AAB64206.1"/>
    <property type="molecule type" value="mRNA"/>
</dbReference>
<dbReference type="EMBL" id="AK049187">
    <property type="protein sequence ID" value="BAC33597.1"/>
    <property type="molecule type" value="mRNA"/>
</dbReference>
<dbReference type="EMBL" id="AK132173">
    <property type="protein sequence ID" value="BAE21011.1"/>
    <property type="molecule type" value="mRNA"/>
</dbReference>
<dbReference type="EMBL" id="CH466567">
    <property type="protein sequence ID" value="EDL00871.1"/>
    <property type="molecule type" value="Genomic_DNA"/>
</dbReference>
<dbReference type="EMBL" id="BC049186">
    <property type="protein sequence ID" value="AAH49186.1"/>
    <property type="molecule type" value="mRNA"/>
</dbReference>
<dbReference type="EMBL" id="BC058098">
    <property type="protein sequence ID" value="AAH58098.1"/>
    <property type="molecule type" value="mRNA"/>
</dbReference>
<dbReference type="CCDS" id="CCDS26710.1"/>
<dbReference type="RefSeq" id="NP_031956.3">
    <property type="nucleotide sequence ID" value="NM_007930.4"/>
</dbReference>
<dbReference type="RefSeq" id="XP_030102997.1">
    <property type="nucleotide sequence ID" value="XM_030247137.1"/>
</dbReference>
<dbReference type="RefSeq" id="XP_030102998.1">
    <property type="nucleotide sequence ID" value="XM_030247138.1"/>
</dbReference>
<dbReference type="RefSeq" id="XP_030102999.1">
    <property type="nucleotide sequence ID" value="XM_030247139.1"/>
</dbReference>
<dbReference type="SMR" id="O35709"/>
<dbReference type="BioGRID" id="199448">
    <property type="interactions" value="1"/>
</dbReference>
<dbReference type="FunCoup" id="O35709">
    <property type="interactions" value="838"/>
</dbReference>
<dbReference type="STRING" id="10090.ENSMUSP00000038783"/>
<dbReference type="iPTMnet" id="O35709"/>
<dbReference type="PhosphoSitePlus" id="O35709"/>
<dbReference type="PaxDb" id="10090-ENSMUSP00000038783"/>
<dbReference type="PeptideAtlas" id="O35709"/>
<dbReference type="ProteomicsDB" id="275660"/>
<dbReference type="Antibodypedia" id="24333">
    <property type="antibodies" value="273 antibodies from 35 providers"/>
</dbReference>
<dbReference type="DNASU" id="13803"/>
<dbReference type="Ensembl" id="ENSMUST00000041623.9">
    <property type="protein sequence ID" value="ENSMUSP00000038783.8"/>
    <property type="gene ID" value="ENSMUSG00000041773.9"/>
</dbReference>
<dbReference type="GeneID" id="13803"/>
<dbReference type="KEGG" id="mmu:13803"/>
<dbReference type="UCSC" id="uc007rod.2">
    <property type="organism name" value="mouse"/>
</dbReference>
<dbReference type="AGR" id="MGI:109610"/>
<dbReference type="CTD" id="8507"/>
<dbReference type="MGI" id="MGI:109610">
    <property type="gene designation" value="Enc1"/>
</dbReference>
<dbReference type="VEuPathDB" id="HostDB:ENSMUSG00000041773"/>
<dbReference type="eggNOG" id="KOG4441">
    <property type="taxonomic scope" value="Eukaryota"/>
</dbReference>
<dbReference type="GeneTree" id="ENSGT00950000182983"/>
<dbReference type="HOGENOM" id="CLU_004253_14_6_1"/>
<dbReference type="InParanoid" id="O35709"/>
<dbReference type="OMA" id="KMSVSMH"/>
<dbReference type="OrthoDB" id="6359816at2759"/>
<dbReference type="PhylomeDB" id="O35709"/>
<dbReference type="TreeFam" id="TF329218"/>
<dbReference type="BioGRID-ORCS" id="13803">
    <property type="hits" value="3 hits in 80 CRISPR screens"/>
</dbReference>
<dbReference type="ChiTaRS" id="Enc1">
    <property type="organism name" value="mouse"/>
</dbReference>
<dbReference type="PRO" id="PR:O35709"/>
<dbReference type="Proteomes" id="UP000000589">
    <property type="component" value="Chromosome 13"/>
</dbReference>
<dbReference type="RNAct" id="O35709">
    <property type="molecule type" value="protein"/>
</dbReference>
<dbReference type="Bgee" id="ENSMUSG00000041773">
    <property type="expression patterns" value="Expressed in barrel cortex and 272 other cell types or tissues"/>
</dbReference>
<dbReference type="GO" id="GO:0000785">
    <property type="term" value="C:chromatin"/>
    <property type="evidence" value="ECO:0007669"/>
    <property type="project" value="Ensembl"/>
</dbReference>
<dbReference type="GO" id="GO:0031463">
    <property type="term" value="C:Cul3-RING ubiquitin ligase complex"/>
    <property type="evidence" value="ECO:0000250"/>
    <property type="project" value="UniProtKB"/>
</dbReference>
<dbReference type="GO" id="GO:0005737">
    <property type="term" value="C:cytoplasm"/>
    <property type="evidence" value="ECO:0000250"/>
    <property type="project" value="UniProtKB"/>
</dbReference>
<dbReference type="GO" id="GO:0005856">
    <property type="term" value="C:cytoskeleton"/>
    <property type="evidence" value="ECO:0007669"/>
    <property type="project" value="UniProtKB-SubCell"/>
</dbReference>
<dbReference type="GO" id="GO:0043025">
    <property type="term" value="C:neuronal cell body"/>
    <property type="evidence" value="ECO:0007669"/>
    <property type="project" value="Ensembl"/>
</dbReference>
<dbReference type="GO" id="GO:0016363">
    <property type="term" value="C:nuclear matrix"/>
    <property type="evidence" value="ECO:0007669"/>
    <property type="project" value="UniProtKB-SubCell"/>
</dbReference>
<dbReference type="GO" id="GO:0005654">
    <property type="term" value="C:nucleoplasm"/>
    <property type="evidence" value="ECO:0007669"/>
    <property type="project" value="Ensembl"/>
</dbReference>
<dbReference type="GO" id="GO:0003779">
    <property type="term" value="F:actin binding"/>
    <property type="evidence" value="ECO:0007669"/>
    <property type="project" value="UniProtKB-KW"/>
</dbReference>
<dbReference type="GO" id="GO:0017148">
    <property type="term" value="P:negative regulation of translation"/>
    <property type="evidence" value="ECO:0000250"/>
    <property type="project" value="UniProtKB"/>
</dbReference>
<dbReference type="GO" id="GO:0010976">
    <property type="term" value="P:positive regulation of neuron projection development"/>
    <property type="evidence" value="ECO:0007669"/>
    <property type="project" value="Ensembl"/>
</dbReference>
<dbReference type="GO" id="GO:0010499">
    <property type="term" value="P:proteasomal ubiquitin-independent protein catabolic process"/>
    <property type="evidence" value="ECO:0000250"/>
    <property type="project" value="UniProtKB"/>
</dbReference>
<dbReference type="GO" id="GO:0016567">
    <property type="term" value="P:protein ubiquitination"/>
    <property type="evidence" value="ECO:0000250"/>
    <property type="project" value="UniProtKB"/>
</dbReference>
<dbReference type="CDD" id="cd18515">
    <property type="entry name" value="BACK_KLHL37_ENC1"/>
    <property type="match status" value="1"/>
</dbReference>
<dbReference type="CDD" id="cd18267">
    <property type="entry name" value="BTB_POZ_KLHL37_ENC1"/>
    <property type="match status" value="1"/>
</dbReference>
<dbReference type="FunFam" id="2.120.10.80:FF:000003">
    <property type="entry name" value="Ectoderm-neural cortex protein 1"/>
    <property type="match status" value="1"/>
</dbReference>
<dbReference type="FunFam" id="2.120.10.80:FF:000004">
    <property type="entry name" value="Ectoderm-neural cortex protein 1"/>
    <property type="match status" value="1"/>
</dbReference>
<dbReference type="FunFam" id="3.30.710.10:FF:000023">
    <property type="entry name" value="Ectoderm-neural cortex protein 1"/>
    <property type="match status" value="1"/>
</dbReference>
<dbReference type="FunFam" id="1.25.40.420:FF:000001">
    <property type="entry name" value="Kelch-like family member 12"/>
    <property type="match status" value="1"/>
</dbReference>
<dbReference type="Gene3D" id="1.25.40.420">
    <property type="match status" value="1"/>
</dbReference>
<dbReference type="Gene3D" id="2.120.10.80">
    <property type="entry name" value="Kelch-type beta propeller"/>
    <property type="match status" value="2"/>
</dbReference>
<dbReference type="Gene3D" id="3.30.710.10">
    <property type="entry name" value="Potassium Channel Kv1.1, Chain A"/>
    <property type="match status" value="1"/>
</dbReference>
<dbReference type="InterPro" id="IPR011705">
    <property type="entry name" value="BACK"/>
</dbReference>
<dbReference type="InterPro" id="IPR017096">
    <property type="entry name" value="BTB-kelch_protein"/>
</dbReference>
<dbReference type="InterPro" id="IPR000210">
    <property type="entry name" value="BTB/POZ_dom"/>
</dbReference>
<dbReference type="InterPro" id="IPR047097">
    <property type="entry name" value="ENC1_BACK"/>
</dbReference>
<dbReference type="InterPro" id="IPR030562">
    <property type="entry name" value="ENC1_BTB_POZ_dom"/>
</dbReference>
<dbReference type="InterPro" id="IPR015915">
    <property type="entry name" value="Kelch-typ_b-propeller"/>
</dbReference>
<dbReference type="InterPro" id="IPR006652">
    <property type="entry name" value="Kelch_1"/>
</dbReference>
<dbReference type="InterPro" id="IPR011333">
    <property type="entry name" value="SKP1/BTB/POZ_sf"/>
</dbReference>
<dbReference type="PANTHER" id="PTHR24412:SF496">
    <property type="entry name" value="ECTODERM-NEURAL CORTEX PROTEIN 1"/>
    <property type="match status" value="1"/>
</dbReference>
<dbReference type="PANTHER" id="PTHR24412">
    <property type="entry name" value="KELCH PROTEIN"/>
    <property type="match status" value="1"/>
</dbReference>
<dbReference type="Pfam" id="PF07707">
    <property type="entry name" value="BACK"/>
    <property type="match status" value="1"/>
</dbReference>
<dbReference type="Pfam" id="PF00651">
    <property type="entry name" value="BTB"/>
    <property type="match status" value="1"/>
</dbReference>
<dbReference type="Pfam" id="PF24681">
    <property type="entry name" value="Kelch_KLHDC2_KLHL20_DRC7"/>
    <property type="match status" value="2"/>
</dbReference>
<dbReference type="PIRSF" id="PIRSF037037">
    <property type="entry name" value="Kelch-like_protein_gigaxonin"/>
    <property type="match status" value="1"/>
</dbReference>
<dbReference type="SMART" id="SM00875">
    <property type="entry name" value="BACK"/>
    <property type="match status" value="1"/>
</dbReference>
<dbReference type="SMART" id="SM00225">
    <property type="entry name" value="BTB"/>
    <property type="match status" value="1"/>
</dbReference>
<dbReference type="SMART" id="SM00612">
    <property type="entry name" value="Kelch"/>
    <property type="match status" value="6"/>
</dbReference>
<dbReference type="SUPFAM" id="SSF117281">
    <property type="entry name" value="Kelch motif"/>
    <property type="match status" value="1"/>
</dbReference>
<dbReference type="SUPFAM" id="SSF54695">
    <property type="entry name" value="POZ domain"/>
    <property type="match status" value="1"/>
</dbReference>
<dbReference type="PROSITE" id="PS50097">
    <property type="entry name" value="BTB"/>
    <property type="match status" value="1"/>
</dbReference>
<gene>
    <name type="primary">Enc1</name>
    <name type="synonym">Enc-1</name>
</gene>
<protein>
    <recommendedName>
        <fullName>Ectoderm-neural cortex protein 1</fullName>
        <shortName>ENC-1</shortName>
    </recommendedName>
</protein>
<keyword id="KW-0009">Actin-binding</keyword>
<keyword id="KW-0963">Cytoplasm</keyword>
<keyword id="KW-0206">Cytoskeleton</keyword>
<keyword id="KW-0217">Developmental protein</keyword>
<keyword id="KW-0880">Kelch repeat</keyword>
<keyword id="KW-0539">Nucleus</keyword>
<keyword id="KW-1185">Reference proteome</keyword>
<keyword id="KW-0677">Repeat</keyword>
<keyword id="KW-0832">Ubl conjugation</keyword>
<feature type="chain" id="PRO_0000119069" description="Ectoderm-neural cortex protein 1">
    <location>
        <begin position="1"/>
        <end position="589"/>
    </location>
</feature>
<feature type="domain" description="BTB" evidence="2">
    <location>
        <begin position="46"/>
        <end position="114"/>
    </location>
</feature>
<feature type="repeat" description="Kelch 1">
    <location>
        <begin position="296"/>
        <end position="340"/>
    </location>
</feature>
<feature type="repeat" description="Kelch 2">
    <location>
        <begin position="341"/>
        <end position="388"/>
    </location>
</feature>
<feature type="repeat" description="Kelch 3">
    <location>
        <begin position="389"/>
        <end position="444"/>
    </location>
</feature>
<feature type="repeat" description="Kelch 4">
    <location>
        <begin position="446"/>
        <end position="492"/>
    </location>
</feature>
<feature type="repeat" description="Kelch 5">
    <location>
        <begin position="494"/>
        <end position="538"/>
    </location>
</feature>
<feature type="repeat" description="Kelch 6">
    <location>
        <begin position="539"/>
        <end position="585"/>
    </location>
</feature>
<feature type="sequence conflict" description="In Ref. 1; AAB64206." evidence="3" ref="1">
    <original>N</original>
    <variation>S</variation>
    <location>
        <position position="182"/>
    </location>
</feature>
<name>ENC1_MOUSE</name>
<proteinExistence type="evidence at transcript level"/>
<comment type="function">
    <text evidence="1">Actin-binding protein involved in the regulation of neuronal process formation and in differentiation of neural crest cells. Down-regulates transcription factor NF2L2/NRF2 by decreasing the rate of protein synthesis and not via a ubiquitin-mediated proteasomal degradation mechanism (By similarity).</text>
</comment>
<comment type="subunit">
    <text evidence="1">Binds to RB1. Hypophosphorylated RB1 associates with ENC1 during neuronal differentiation, while hyperphosphorylated RB1 associates with ENC1 in undifferentiating cells. Part of a complex that contains CUL3, RBX1 and ENC1 (By similarity). Interacts indirectly with KEAP1 (By similarity).</text>
</comment>
<comment type="subcellular location">
    <subcellularLocation>
        <location evidence="1">Nucleus matrix</location>
    </subcellularLocation>
    <subcellularLocation>
        <location>Cytoplasm</location>
    </subcellularLocation>
    <subcellularLocation>
        <location>Cytoplasm</location>
        <location>Cytoskeleton</location>
    </subcellularLocation>
    <text>Interacts with the actin cytoskeleton.</text>
</comment>
<comment type="tissue specificity">
    <text>Primarily expressed in the nervous system.</text>
</comment>
<comment type="developmental stage">
    <text>Expression is highly dynamic but mostly restricted to the nervous system. Outside the nervous system, expression is detected in the rostral-most somitomere of the presomitic mesoderm, at the times corresponding to the epithelialization that precedes somite formation. First detected in the brain and spinal cord of 12 PC embryos.</text>
</comment>
<comment type="PTM">
    <text evidence="1">Ubiquitinated by E3 ubiquitin ligase complex formed by CUL3 and RBX1 and probably targeted for proteasome-independent degradation. Quinone-induced oxidative stress increases its ubiquitination (By similarity).</text>
</comment>
<reference key="1">
    <citation type="journal article" date="1997" name="J. Neurosci.">
        <title>ENC-1: a novel mammalian kelch-related gene specifically expressed in the nervous system encodes an actin-binding protein.</title>
        <authorList>
            <person name="Hernandez M.-C."/>
            <person name="Andres-Barquin P.J."/>
            <person name="Martinez S."/>
            <person name="Bulfone A."/>
            <person name="Rubenstein J.L.R."/>
            <person name="Israel M.A."/>
        </authorList>
    </citation>
    <scope>NUCLEOTIDE SEQUENCE [MRNA]</scope>
    <source>
        <strain>Swiss albino</strain>
        <tissue>Brain</tissue>
    </source>
</reference>
<reference key="2">
    <citation type="journal article" date="2005" name="Science">
        <title>The transcriptional landscape of the mammalian genome.</title>
        <authorList>
            <person name="Carninci P."/>
            <person name="Kasukawa T."/>
            <person name="Katayama S."/>
            <person name="Gough J."/>
            <person name="Frith M.C."/>
            <person name="Maeda N."/>
            <person name="Oyama R."/>
            <person name="Ravasi T."/>
            <person name="Lenhard B."/>
            <person name="Wells C."/>
            <person name="Kodzius R."/>
            <person name="Shimokawa K."/>
            <person name="Bajic V.B."/>
            <person name="Brenner S.E."/>
            <person name="Batalov S."/>
            <person name="Forrest A.R."/>
            <person name="Zavolan M."/>
            <person name="Davis M.J."/>
            <person name="Wilming L.G."/>
            <person name="Aidinis V."/>
            <person name="Allen J.E."/>
            <person name="Ambesi-Impiombato A."/>
            <person name="Apweiler R."/>
            <person name="Aturaliya R.N."/>
            <person name="Bailey T.L."/>
            <person name="Bansal M."/>
            <person name="Baxter L."/>
            <person name="Beisel K.W."/>
            <person name="Bersano T."/>
            <person name="Bono H."/>
            <person name="Chalk A.M."/>
            <person name="Chiu K.P."/>
            <person name="Choudhary V."/>
            <person name="Christoffels A."/>
            <person name="Clutterbuck D.R."/>
            <person name="Crowe M.L."/>
            <person name="Dalla E."/>
            <person name="Dalrymple B.P."/>
            <person name="de Bono B."/>
            <person name="Della Gatta G."/>
            <person name="di Bernardo D."/>
            <person name="Down T."/>
            <person name="Engstrom P."/>
            <person name="Fagiolini M."/>
            <person name="Faulkner G."/>
            <person name="Fletcher C.F."/>
            <person name="Fukushima T."/>
            <person name="Furuno M."/>
            <person name="Futaki S."/>
            <person name="Gariboldi M."/>
            <person name="Georgii-Hemming P."/>
            <person name="Gingeras T.R."/>
            <person name="Gojobori T."/>
            <person name="Green R.E."/>
            <person name="Gustincich S."/>
            <person name="Harbers M."/>
            <person name="Hayashi Y."/>
            <person name="Hensch T.K."/>
            <person name="Hirokawa N."/>
            <person name="Hill D."/>
            <person name="Huminiecki L."/>
            <person name="Iacono M."/>
            <person name="Ikeo K."/>
            <person name="Iwama A."/>
            <person name="Ishikawa T."/>
            <person name="Jakt M."/>
            <person name="Kanapin A."/>
            <person name="Katoh M."/>
            <person name="Kawasawa Y."/>
            <person name="Kelso J."/>
            <person name="Kitamura H."/>
            <person name="Kitano H."/>
            <person name="Kollias G."/>
            <person name="Krishnan S.P."/>
            <person name="Kruger A."/>
            <person name="Kummerfeld S.K."/>
            <person name="Kurochkin I.V."/>
            <person name="Lareau L.F."/>
            <person name="Lazarevic D."/>
            <person name="Lipovich L."/>
            <person name="Liu J."/>
            <person name="Liuni S."/>
            <person name="McWilliam S."/>
            <person name="Madan Babu M."/>
            <person name="Madera M."/>
            <person name="Marchionni L."/>
            <person name="Matsuda H."/>
            <person name="Matsuzawa S."/>
            <person name="Miki H."/>
            <person name="Mignone F."/>
            <person name="Miyake S."/>
            <person name="Morris K."/>
            <person name="Mottagui-Tabar S."/>
            <person name="Mulder N."/>
            <person name="Nakano N."/>
            <person name="Nakauchi H."/>
            <person name="Ng P."/>
            <person name="Nilsson R."/>
            <person name="Nishiguchi S."/>
            <person name="Nishikawa S."/>
            <person name="Nori F."/>
            <person name="Ohara O."/>
            <person name="Okazaki Y."/>
            <person name="Orlando V."/>
            <person name="Pang K.C."/>
            <person name="Pavan W.J."/>
            <person name="Pavesi G."/>
            <person name="Pesole G."/>
            <person name="Petrovsky N."/>
            <person name="Piazza S."/>
            <person name="Reed J."/>
            <person name="Reid J.F."/>
            <person name="Ring B.Z."/>
            <person name="Ringwald M."/>
            <person name="Rost B."/>
            <person name="Ruan Y."/>
            <person name="Salzberg S.L."/>
            <person name="Sandelin A."/>
            <person name="Schneider C."/>
            <person name="Schoenbach C."/>
            <person name="Sekiguchi K."/>
            <person name="Semple C.A."/>
            <person name="Seno S."/>
            <person name="Sessa L."/>
            <person name="Sheng Y."/>
            <person name="Shibata Y."/>
            <person name="Shimada H."/>
            <person name="Shimada K."/>
            <person name="Silva D."/>
            <person name="Sinclair B."/>
            <person name="Sperling S."/>
            <person name="Stupka E."/>
            <person name="Sugiura K."/>
            <person name="Sultana R."/>
            <person name="Takenaka Y."/>
            <person name="Taki K."/>
            <person name="Tammoja K."/>
            <person name="Tan S.L."/>
            <person name="Tang S."/>
            <person name="Taylor M.S."/>
            <person name="Tegner J."/>
            <person name="Teichmann S.A."/>
            <person name="Ueda H.R."/>
            <person name="van Nimwegen E."/>
            <person name="Verardo R."/>
            <person name="Wei C.L."/>
            <person name="Yagi K."/>
            <person name="Yamanishi H."/>
            <person name="Zabarovsky E."/>
            <person name="Zhu S."/>
            <person name="Zimmer A."/>
            <person name="Hide W."/>
            <person name="Bult C."/>
            <person name="Grimmond S.M."/>
            <person name="Teasdale R.D."/>
            <person name="Liu E.T."/>
            <person name="Brusic V."/>
            <person name="Quackenbush J."/>
            <person name="Wahlestedt C."/>
            <person name="Mattick J.S."/>
            <person name="Hume D.A."/>
            <person name="Kai C."/>
            <person name="Sasaki D."/>
            <person name="Tomaru Y."/>
            <person name="Fukuda S."/>
            <person name="Kanamori-Katayama M."/>
            <person name="Suzuki M."/>
            <person name="Aoki J."/>
            <person name="Arakawa T."/>
            <person name="Iida J."/>
            <person name="Imamura K."/>
            <person name="Itoh M."/>
            <person name="Kato T."/>
            <person name="Kawaji H."/>
            <person name="Kawagashira N."/>
            <person name="Kawashima T."/>
            <person name="Kojima M."/>
            <person name="Kondo S."/>
            <person name="Konno H."/>
            <person name="Nakano K."/>
            <person name="Ninomiya N."/>
            <person name="Nishio T."/>
            <person name="Okada M."/>
            <person name="Plessy C."/>
            <person name="Shibata K."/>
            <person name="Shiraki T."/>
            <person name="Suzuki S."/>
            <person name="Tagami M."/>
            <person name="Waki K."/>
            <person name="Watahiki A."/>
            <person name="Okamura-Oho Y."/>
            <person name="Suzuki H."/>
            <person name="Kawai J."/>
            <person name="Hayashizaki Y."/>
        </authorList>
    </citation>
    <scope>NUCLEOTIDE SEQUENCE [LARGE SCALE MRNA]</scope>
    <source>
        <strain>C57BL/6J</strain>
        <tissue>Head</tissue>
    </source>
</reference>
<reference key="3">
    <citation type="submission" date="2005-09" db="EMBL/GenBank/DDBJ databases">
        <authorList>
            <person name="Mural R.J."/>
            <person name="Adams M.D."/>
            <person name="Myers E.W."/>
            <person name="Smith H.O."/>
            <person name="Venter J.C."/>
        </authorList>
    </citation>
    <scope>NUCLEOTIDE SEQUENCE [LARGE SCALE GENOMIC DNA]</scope>
</reference>
<reference key="4">
    <citation type="journal article" date="2004" name="Genome Res.">
        <title>The status, quality, and expansion of the NIH full-length cDNA project: the Mammalian Gene Collection (MGC).</title>
        <authorList>
            <consortium name="The MGC Project Team"/>
        </authorList>
    </citation>
    <scope>NUCLEOTIDE SEQUENCE [LARGE SCALE MRNA]</scope>
    <source>
        <strain>C57BL/6J</strain>
        <strain>FVB/N-3</strain>
        <tissue>Brain</tissue>
        <tissue>Mammary tumor</tissue>
    </source>
</reference>
<evidence type="ECO:0000250" key="1"/>
<evidence type="ECO:0000255" key="2">
    <source>
        <dbReference type="PROSITE-ProRule" id="PRU00037"/>
    </source>
</evidence>
<evidence type="ECO:0000305" key="3"/>
<sequence>MSVSVHENRKSRASSGSINIYLFHKSSYADSVLTHLNLLRQQRLFTDVLLHAGNRTFPCHRAVLAACSRYFEAMFSGGLKESQDSEVNFDNSIHPEVLELLLDYAYSSRVIINEENAESLLEAGDMLEFQDIRDACAEFLEKNLHPTNCLGMLLLSDAHQCTKLYELSWRMCLSNFQTIRKNEDFLQLPQDMVVQLLSSEELETEDERLVYESAMNWISYDLKKRYCYLPELLQTVRLALLPAIYLMENVAMEELITKQRKSKEIVEEAIRCKLKILQNDGVVTSLCARPRKTGHALFLLGGQTFMCDKLYLVDQKAKEIIPKADIPSPRKEFSACAIGCKVYITGGRGSENGVSKDVWVYDTLHEEWSKAAPMLVARFGHGSAELKHCLYVVGGHTAATGCLPASPSVSLKQVEQYDPTTNKWTMVAPLREGVSNAAVVSAKLKLFAFGGTSVSHDKLPKVQCYDQCENRWSVPATCPQPWRYTAAAVLGNQIFIMGGDTEFSACSAYKFNSETYQWTKVGDVTAKRMSCHAVASGNKLYVVGGYFGIQRCKTLDCYDPTLDVWNSITTVPYSLIPTAFVSTWKHLPS</sequence>
<organism>
    <name type="scientific">Mus musculus</name>
    <name type="common">Mouse</name>
    <dbReference type="NCBI Taxonomy" id="10090"/>
    <lineage>
        <taxon>Eukaryota</taxon>
        <taxon>Metazoa</taxon>
        <taxon>Chordata</taxon>
        <taxon>Craniata</taxon>
        <taxon>Vertebrata</taxon>
        <taxon>Euteleostomi</taxon>
        <taxon>Mammalia</taxon>
        <taxon>Eutheria</taxon>
        <taxon>Euarchontoglires</taxon>
        <taxon>Glires</taxon>
        <taxon>Rodentia</taxon>
        <taxon>Myomorpha</taxon>
        <taxon>Muroidea</taxon>
        <taxon>Muridae</taxon>
        <taxon>Murinae</taxon>
        <taxon>Mus</taxon>
        <taxon>Mus</taxon>
    </lineage>
</organism>
<accession>O35709</accession>
<accession>Q8C7V2</accession>